<protein>
    <recommendedName>
        <fullName>Histone H3.2</fullName>
    </recommendedName>
</protein>
<dbReference type="EMBL" id="AF239930">
    <property type="protein sequence ID" value="AAF64452.1"/>
    <property type="molecule type" value="mRNA"/>
</dbReference>
<dbReference type="SMR" id="Q71T45"/>
<dbReference type="GO" id="GO:0000786">
    <property type="term" value="C:nucleosome"/>
    <property type="evidence" value="ECO:0007669"/>
    <property type="project" value="UniProtKB-KW"/>
</dbReference>
<dbReference type="GO" id="GO:0005634">
    <property type="term" value="C:nucleus"/>
    <property type="evidence" value="ECO:0007669"/>
    <property type="project" value="UniProtKB-SubCell"/>
</dbReference>
<dbReference type="GO" id="GO:0003677">
    <property type="term" value="F:DNA binding"/>
    <property type="evidence" value="ECO:0007669"/>
    <property type="project" value="UniProtKB-KW"/>
</dbReference>
<dbReference type="GO" id="GO:0046982">
    <property type="term" value="F:protein heterodimerization activity"/>
    <property type="evidence" value="ECO:0007669"/>
    <property type="project" value="InterPro"/>
</dbReference>
<dbReference type="GO" id="GO:0030527">
    <property type="term" value="F:structural constituent of chromatin"/>
    <property type="evidence" value="ECO:0007669"/>
    <property type="project" value="InterPro"/>
</dbReference>
<dbReference type="CDD" id="cd22911">
    <property type="entry name" value="HFD_H3"/>
    <property type="match status" value="1"/>
</dbReference>
<dbReference type="FunFam" id="1.10.20.10:FF:000078">
    <property type="entry name" value="Histone H3"/>
    <property type="match status" value="1"/>
</dbReference>
<dbReference type="FunFam" id="1.10.20.10:FF:000044">
    <property type="entry name" value="Histone H3.3"/>
    <property type="match status" value="1"/>
</dbReference>
<dbReference type="Gene3D" id="1.10.20.10">
    <property type="entry name" value="Histone, subunit A"/>
    <property type="match status" value="1"/>
</dbReference>
<dbReference type="InterPro" id="IPR009072">
    <property type="entry name" value="Histone-fold"/>
</dbReference>
<dbReference type="InterPro" id="IPR007125">
    <property type="entry name" value="Histone_H2A/H2B/H3"/>
</dbReference>
<dbReference type="InterPro" id="IPR000164">
    <property type="entry name" value="Histone_H3/CENP-A"/>
</dbReference>
<dbReference type="PANTHER" id="PTHR11426">
    <property type="entry name" value="HISTONE H3"/>
    <property type="match status" value="1"/>
</dbReference>
<dbReference type="Pfam" id="PF00125">
    <property type="entry name" value="Histone"/>
    <property type="match status" value="1"/>
</dbReference>
<dbReference type="PRINTS" id="PR00622">
    <property type="entry name" value="HISTONEH3"/>
</dbReference>
<dbReference type="SMART" id="SM00428">
    <property type="entry name" value="H3"/>
    <property type="match status" value="1"/>
</dbReference>
<dbReference type="SUPFAM" id="SSF47113">
    <property type="entry name" value="Histone-fold"/>
    <property type="match status" value="1"/>
</dbReference>
<dbReference type="PROSITE" id="PS00322">
    <property type="entry name" value="HISTONE_H3_1"/>
    <property type="match status" value="1"/>
</dbReference>
<dbReference type="PROSITE" id="PS00959">
    <property type="entry name" value="HISTONE_H3_2"/>
    <property type="match status" value="1"/>
</dbReference>
<gene>
    <name type="primary">H3</name>
</gene>
<name>H32_EUPES</name>
<comment type="function">
    <text>Core component of nucleosome. Nucleosomes wrap and compact DNA into chromatin, limiting DNA accessibility to the cellular machineries which require DNA as a template. Histones thereby play a central role in transcription regulation, DNA repair, DNA replication and chromosomal stability. DNA accessibility is regulated via a complex set of post-translational modifications of histones, also called histone code, and nucleosome remodeling.</text>
</comment>
<comment type="subunit">
    <text>The nucleosome is a histone octamer containing two molecules each of H2A, H2B, H3 and H4 assembled in one H3-H4 heterotetramer and two H2A-H2B heterodimers. The octamer wraps approximately 147 bp of DNA.</text>
</comment>
<comment type="subcellular location">
    <subcellularLocation>
        <location evidence="1">Nucleus</location>
    </subcellularLocation>
    <subcellularLocation>
        <location evidence="1">Chromosome</location>
    </subcellularLocation>
</comment>
<comment type="PTM">
    <text evidence="1">Acetylation is generally linked to gene activation. Can be acetylated to form H3K9ac, H3K14ac, H3K18ac and H3K23ac. H3K9ac could compete with H3K9me and prevent gene silencing. H3K9ac is restricted to euchromatin (By similarity).</text>
</comment>
<comment type="PTM">
    <text evidence="1">Methylated to form mainly H3K4me, H3K9me, H3K18me, H3K23me, H3K27me and H3K36me. H3K4me1/2/3, H3K9me3, H3K27me3 and H3K36me1/2/3 are typical marks for euchromatin, whereas heterochromatic chromocenters are enriched in H3K9me1/2 and H3K27me1/2. H2BK143ub1 is probably prerequisite for H3K4me (By similarity).</text>
</comment>
<comment type="PTM">
    <text evidence="1">Can be phosphorylated to form H3S10ph, H3T11ph and H3S28ph.</text>
</comment>
<comment type="similarity">
    <text evidence="3">Belongs to the histone H3 family.</text>
</comment>
<comment type="caution">
    <text evidence="3">To ensure consistency between histone entries, we follow the 'Brno' nomenclature for histone modifications, with positions referring to those used in the literature for the 'closest' model organism. Due to slight variations in histone sequences between organisms and to the presence of initiator methionine in UniProtKB/Swiss-Prot sequences, the actual positions of modified amino acids in the sequence generally differ. In this entry the following conventions are used: H3K4me = methylated Lys-5; H3K9ac = acetylated Lys-10; H3K9me = methylated Lys-10; H3S10ph = phosphorylated Ser-11; H3T11ph = phosphorylated Thr-12; H3K14ac = acetylated Lys-15; H3K18ac = acetylated Lys-19; H3K18me = methylated Lys-19; H3K23ac = acetylated Lys-24; H3K23me = methylated Lys-24; H3K27me = methylated Lys-28; H3S28ph = phosphorylated Ser-29; H3K36me = methylated Lys-37.</text>
</comment>
<proteinExistence type="evidence at transcript level"/>
<organism>
    <name type="scientific">Euphorbia esula</name>
    <name type="common">Leafy spurge</name>
    <dbReference type="NCBI Taxonomy" id="3993"/>
    <lineage>
        <taxon>Eukaryota</taxon>
        <taxon>Viridiplantae</taxon>
        <taxon>Streptophyta</taxon>
        <taxon>Embryophyta</taxon>
        <taxon>Tracheophyta</taxon>
        <taxon>Spermatophyta</taxon>
        <taxon>Magnoliopsida</taxon>
        <taxon>eudicotyledons</taxon>
        <taxon>Gunneridae</taxon>
        <taxon>Pentapetalae</taxon>
        <taxon>rosids</taxon>
        <taxon>fabids</taxon>
        <taxon>Malpighiales</taxon>
        <taxon>Euphorbiaceae</taxon>
        <taxon>Euphorbioideae</taxon>
        <taxon>Euphorbieae</taxon>
        <taxon>Euphorbia</taxon>
        <taxon>Euphorbia subgen. Esula</taxon>
        <taxon>Euphorbia sect. Esula</taxon>
    </lineage>
</organism>
<evidence type="ECO:0000250" key="1"/>
<evidence type="ECO:0000256" key="2">
    <source>
        <dbReference type="SAM" id="MobiDB-lite"/>
    </source>
</evidence>
<evidence type="ECO:0000305" key="3"/>
<reference key="1">
    <citation type="submission" date="2000-03" db="EMBL/GenBank/DDBJ databases">
        <title>Identification of mRNAs expressed in underground adventitious buds of Euphorbia esula (leafy spurge).</title>
        <authorList>
            <person name="Anderson J.V."/>
            <person name="Horvath D.P."/>
        </authorList>
    </citation>
    <scope>NUCLEOTIDE SEQUENCE [MRNA]</scope>
</reference>
<feature type="initiator methionine" description="Removed" evidence="1">
    <location>
        <position position="1"/>
    </location>
</feature>
<feature type="chain" id="PRO_0000221275" description="Histone H3.2">
    <location>
        <begin position="2"/>
        <end position="136"/>
    </location>
</feature>
<feature type="region of interest" description="Disordered" evidence="2">
    <location>
        <begin position="1"/>
        <end position="43"/>
    </location>
</feature>
<feature type="modified residue" description="N6-methylated lysine" evidence="1">
    <location>
        <position position="5"/>
    </location>
</feature>
<feature type="modified residue" description="N6-acetyllysine; alternate" evidence="1">
    <location>
        <position position="10"/>
    </location>
</feature>
<feature type="modified residue" description="N6-methylated lysine; alternate" evidence="1">
    <location>
        <position position="10"/>
    </location>
</feature>
<feature type="modified residue" description="Phosphoserine" evidence="1">
    <location>
        <position position="11"/>
    </location>
</feature>
<feature type="modified residue" description="Phosphothreonine" evidence="1">
    <location>
        <position position="12"/>
    </location>
</feature>
<feature type="modified residue" description="N6-acetyllysine" evidence="1">
    <location>
        <position position="15"/>
    </location>
</feature>
<feature type="modified residue" description="N6-acetyllysine; alternate" evidence="1">
    <location>
        <position position="19"/>
    </location>
</feature>
<feature type="modified residue" description="N6-methylated lysine; alternate" evidence="1">
    <location>
        <position position="19"/>
    </location>
</feature>
<feature type="modified residue" description="N6-acetyllysine; alternate" evidence="1">
    <location>
        <position position="24"/>
    </location>
</feature>
<feature type="modified residue" description="N6-methylated lysine; alternate" evidence="1">
    <location>
        <position position="24"/>
    </location>
</feature>
<feature type="modified residue" description="N6-methylated lysine" evidence="1">
    <location>
        <position position="28"/>
    </location>
</feature>
<feature type="modified residue" description="Phosphoserine" evidence="1">
    <location>
        <position position="29"/>
    </location>
</feature>
<feature type="modified residue" description="N6-methylated lysine" evidence="1">
    <location>
        <position position="37"/>
    </location>
</feature>
<sequence length="136" mass="15268">MARTKQTARKSTGGKAPRKQLATKAARKSAPATGGVKKPHRFRPGTVALREIRKYQKSTELLIRKLPFQRLVREIAQDFKTDLRFQSSAVAALQEAAEAYLVGLFEDTNLCAIHAKRVTIMPKDIQLARRIRGERA</sequence>
<keyword id="KW-0007">Acetylation</keyword>
<keyword id="KW-0158">Chromosome</keyword>
<keyword id="KW-0238">DNA-binding</keyword>
<keyword id="KW-0488">Methylation</keyword>
<keyword id="KW-0544">Nucleosome core</keyword>
<keyword id="KW-0539">Nucleus</keyword>
<keyword id="KW-0597">Phosphoprotein</keyword>
<accession>Q71T45</accession>